<protein>
    <recommendedName>
        <fullName evidence="1">Large ribosomal subunit protein bL36</fullName>
    </recommendedName>
    <alternativeName>
        <fullName evidence="2">50S ribosomal protein L36</fullName>
    </alternativeName>
</protein>
<comment type="similarity">
    <text evidence="1">Belongs to the bacterial ribosomal protein bL36 family.</text>
</comment>
<gene>
    <name evidence="1" type="primary">rpmJ</name>
    <name type="ordered locus">SSP0686</name>
</gene>
<dbReference type="EMBL" id="AP008934">
    <property type="protein sequence ID" value="BAE17831.1"/>
    <property type="molecule type" value="Genomic_DNA"/>
</dbReference>
<dbReference type="RefSeq" id="WP_002482634.1">
    <property type="nucleotide sequence ID" value="NZ_MTGA01000036.1"/>
</dbReference>
<dbReference type="SMR" id="Q49ZE5"/>
<dbReference type="GeneID" id="93844506"/>
<dbReference type="KEGG" id="ssp:SSP0686"/>
<dbReference type="eggNOG" id="COG0257">
    <property type="taxonomic scope" value="Bacteria"/>
</dbReference>
<dbReference type="HOGENOM" id="CLU_135723_6_2_9"/>
<dbReference type="OrthoDB" id="9802520at2"/>
<dbReference type="Proteomes" id="UP000006371">
    <property type="component" value="Chromosome"/>
</dbReference>
<dbReference type="GO" id="GO:0005737">
    <property type="term" value="C:cytoplasm"/>
    <property type="evidence" value="ECO:0007669"/>
    <property type="project" value="UniProtKB-ARBA"/>
</dbReference>
<dbReference type="GO" id="GO:1990904">
    <property type="term" value="C:ribonucleoprotein complex"/>
    <property type="evidence" value="ECO:0007669"/>
    <property type="project" value="UniProtKB-KW"/>
</dbReference>
<dbReference type="GO" id="GO:0005840">
    <property type="term" value="C:ribosome"/>
    <property type="evidence" value="ECO:0007669"/>
    <property type="project" value="UniProtKB-KW"/>
</dbReference>
<dbReference type="GO" id="GO:0003735">
    <property type="term" value="F:structural constituent of ribosome"/>
    <property type="evidence" value="ECO:0007669"/>
    <property type="project" value="InterPro"/>
</dbReference>
<dbReference type="GO" id="GO:0006412">
    <property type="term" value="P:translation"/>
    <property type="evidence" value="ECO:0007669"/>
    <property type="project" value="UniProtKB-UniRule"/>
</dbReference>
<dbReference type="HAMAP" id="MF_00251">
    <property type="entry name" value="Ribosomal_bL36"/>
    <property type="match status" value="1"/>
</dbReference>
<dbReference type="InterPro" id="IPR000473">
    <property type="entry name" value="Ribosomal_bL36"/>
</dbReference>
<dbReference type="InterPro" id="IPR035977">
    <property type="entry name" value="Ribosomal_bL36_sp"/>
</dbReference>
<dbReference type="NCBIfam" id="TIGR01022">
    <property type="entry name" value="rpmJ_bact"/>
    <property type="match status" value="1"/>
</dbReference>
<dbReference type="PANTHER" id="PTHR42888">
    <property type="entry name" value="50S RIBOSOMAL PROTEIN L36, CHLOROPLASTIC"/>
    <property type="match status" value="1"/>
</dbReference>
<dbReference type="PANTHER" id="PTHR42888:SF1">
    <property type="entry name" value="LARGE RIBOSOMAL SUBUNIT PROTEIN BL36C"/>
    <property type="match status" value="1"/>
</dbReference>
<dbReference type="Pfam" id="PF00444">
    <property type="entry name" value="Ribosomal_L36"/>
    <property type="match status" value="1"/>
</dbReference>
<dbReference type="SUPFAM" id="SSF57840">
    <property type="entry name" value="Ribosomal protein L36"/>
    <property type="match status" value="1"/>
</dbReference>
<dbReference type="PROSITE" id="PS00828">
    <property type="entry name" value="RIBOSOMAL_L36"/>
    <property type="match status" value="1"/>
</dbReference>
<name>RL36_STAS1</name>
<keyword id="KW-1185">Reference proteome</keyword>
<keyword id="KW-0687">Ribonucleoprotein</keyword>
<keyword id="KW-0689">Ribosomal protein</keyword>
<accession>Q49ZE5</accession>
<organism>
    <name type="scientific">Staphylococcus saprophyticus subsp. saprophyticus (strain ATCC 15305 / DSM 20229 / NCIMB 8711 / NCTC 7292 / S-41)</name>
    <dbReference type="NCBI Taxonomy" id="342451"/>
    <lineage>
        <taxon>Bacteria</taxon>
        <taxon>Bacillati</taxon>
        <taxon>Bacillota</taxon>
        <taxon>Bacilli</taxon>
        <taxon>Bacillales</taxon>
        <taxon>Staphylococcaceae</taxon>
        <taxon>Staphylococcus</taxon>
    </lineage>
</organism>
<sequence>MKVRPSVKPICEKCKVIKRKGKVMVICSNPKHKQRQG</sequence>
<evidence type="ECO:0000255" key="1">
    <source>
        <dbReference type="HAMAP-Rule" id="MF_00251"/>
    </source>
</evidence>
<evidence type="ECO:0000305" key="2"/>
<proteinExistence type="inferred from homology"/>
<feature type="chain" id="PRO_0000302306" description="Large ribosomal subunit protein bL36">
    <location>
        <begin position="1"/>
        <end position="37"/>
    </location>
</feature>
<reference key="1">
    <citation type="journal article" date="2005" name="Proc. Natl. Acad. Sci. U.S.A.">
        <title>Whole genome sequence of Staphylococcus saprophyticus reveals the pathogenesis of uncomplicated urinary tract infection.</title>
        <authorList>
            <person name="Kuroda M."/>
            <person name="Yamashita A."/>
            <person name="Hirakawa H."/>
            <person name="Kumano M."/>
            <person name="Morikawa K."/>
            <person name="Higashide M."/>
            <person name="Maruyama A."/>
            <person name="Inose Y."/>
            <person name="Matoba K."/>
            <person name="Toh H."/>
            <person name="Kuhara S."/>
            <person name="Hattori M."/>
            <person name="Ohta T."/>
        </authorList>
    </citation>
    <scope>NUCLEOTIDE SEQUENCE [LARGE SCALE GENOMIC DNA]</scope>
    <source>
        <strain>ATCC 15305 / DSM 20229 / NCIMB 8711 / NCTC 7292 / S-41</strain>
    </source>
</reference>